<sequence length="364" mass="39815">MAQQTPLYEQHTLCGARMVDFHGWMMPLHYGSQIDEHHAVRGDAGMFDVSHMTIVDFHGSRIREFLRYLLANDVAKLTTPGKALYTGMLTASAGVIDDLIVYFLSEDYFRLVVNSATREKDLAWISEQAEPYGLEITVRDDLSLIAVQGPQAKAKAATLFTDAQRQAVEGMKPFFGVQAGDLFIATTGYTGEAGYEIVMPNEQAADFWRGLLDAGVKPCGLGARDTLRLEAGMNLYGQEMDEGVSPLAANMGWTIAWEPADRNFIGREALEMQREKGTEQLVGLVMTEKGVLRGGLPVRFTDSDGNQKEGIITSGTFSPTLGYSIALARVPAGIGDTAVVQIRNREMPVKVTKPGFVRNGKAIV</sequence>
<gene>
    <name evidence="1" type="primary">gcvT</name>
    <name type="ordered locus">KPN78578_32770</name>
    <name type="ORF">KPN_03341</name>
</gene>
<dbReference type="EC" id="2.1.2.10" evidence="1"/>
<dbReference type="EMBL" id="CP000647">
    <property type="protein sequence ID" value="ABR78738.1"/>
    <property type="molecule type" value="Genomic_DNA"/>
</dbReference>
<dbReference type="RefSeq" id="WP_015958959.1">
    <property type="nucleotide sequence ID" value="NC_009648.1"/>
</dbReference>
<dbReference type="SMR" id="A6TDR7"/>
<dbReference type="STRING" id="272620.KPN_03341"/>
<dbReference type="jPOST" id="A6TDR7"/>
<dbReference type="PaxDb" id="272620-KPN_03341"/>
<dbReference type="EnsemblBacteria" id="ABR78738">
    <property type="protein sequence ID" value="ABR78738"/>
    <property type="gene ID" value="KPN_03341"/>
</dbReference>
<dbReference type="KEGG" id="kpn:KPN_03341"/>
<dbReference type="HOGENOM" id="CLU_007884_10_2_6"/>
<dbReference type="Proteomes" id="UP000000265">
    <property type="component" value="Chromosome"/>
</dbReference>
<dbReference type="GO" id="GO:0005829">
    <property type="term" value="C:cytosol"/>
    <property type="evidence" value="ECO:0007669"/>
    <property type="project" value="TreeGrafter"/>
</dbReference>
<dbReference type="GO" id="GO:0005960">
    <property type="term" value="C:glycine cleavage complex"/>
    <property type="evidence" value="ECO:0007669"/>
    <property type="project" value="InterPro"/>
</dbReference>
<dbReference type="GO" id="GO:0004047">
    <property type="term" value="F:aminomethyltransferase activity"/>
    <property type="evidence" value="ECO:0007669"/>
    <property type="project" value="UniProtKB-UniRule"/>
</dbReference>
<dbReference type="GO" id="GO:0008483">
    <property type="term" value="F:transaminase activity"/>
    <property type="evidence" value="ECO:0007669"/>
    <property type="project" value="UniProtKB-KW"/>
</dbReference>
<dbReference type="GO" id="GO:0019464">
    <property type="term" value="P:glycine decarboxylation via glycine cleavage system"/>
    <property type="evidence" value="ECO:0007669"/>
    <property type="project" value="UniProtKB-UniRule"/>
</dbReference>
<dbReference type="FunFam" id="2.40.30.110:FF:000001">
    <property type="entry name" value="Aminomethyltransferase"/>
    <property type="match status" value="1"/>
</dbReference>
<dbReference type="FunFam" id="3.30.70.1400:FF:000001">
    <property type="entry name" value="Aminomethyltransferase"/>
    <property type="match status" value="1"/>
</dbReference>
<dbReference type="FunFam" id="4.10.1250.10:FF:000001">
    <property type="entry name" value="Aminomethyltransferase"/>
    <property type="match status" value="1"/>
</dbReference>
<dbReference type="Gene3D" id="2.40.30.110">
    <property type="entry name" value="Aminomethyltransferase beta-barrel domains"/>
    <property type="match status" value="1"/>
</dbReference>
<dbReference type="Gene3D" id="3.30.70.1400">
    <property type="entry name" value="Aminomethyltransferase beta-barrel domains"/>
    <property type="match status" value="1"/>
</dbReference>
<dbReference type="Gene3D" id="4.10.1250.10">
    <property type="entry name" value="Aminomethyltransferase fragment"/>
    <property type="match status" value="1"/>
</dbReference>
<dbReference type="Gene3D" id="3.30.1360.120">
    <property type="entry name" value="Probable tRNA modification gtpase trme, domain 1"/>
    <property type="match status" value="1"/>
</dbReference>
<dbReference type="HAMAP" id="MF_00259">
    <property type="entry name" value="GcvT"/>
    <property type="match status" value="1"/>
</dbReference>
<dbReference type="InterPro" id="IPR006223">
    <property type="entry name" value="GCS_T"/>
</dbReference>
<dbReference type="InterPro" id="IPR022903">
    <property type="entry name" value="GCS_T_bac"/>
</dbReference>
<dbReference type="InterPro" id="IPR013977">
    <property type="entry name" value="GCST_C"/>
</dbReference>
<dbReference type="InterPro" id="IPR006222">
    <property type="entry name" value="GCV_T_N"/>
</dbReference>
<dbReference type="InterPro" id="IPR028896">
    <property type="entry name" value="GcvT/YgfZ/DmdA"/>
</dbReference>
<dbReference type="InterPro" id="IPR029043">
    <property type="entry name" value="GcvT/YgfZ_C"/>
</dbReference>
<dbReference type="InterPro" id="IPR027266">
    <property type="entry name" value="TrmE/GcvT_dom1"/>
</dbReference>
<dbReference type="NCBIfam" id="TIGR00528">
    <property type="entry name" value="gcvT"/>
    <property type="match status" value="1"/>
</dbReference>
<dbReference type="NCBIfam" id="NF001567">
    <property type="entry name" value="PRK00389.1"/>
    <property type="match status" value="1"/>
</dbReference>
<dbReference type="PANTHER" id="PTHR43757">
    <property type="entry name" value="AMINOMETHYLTRANSFERASE"/>
    <property type="match status" value="1"/>
</dbReference>
<dbReference type="PANTHER" id="PTHR43757:SF2">
    <property type="entry name" value="AMINOMETHYLTRANSFERASE, MITOCHONDRIAL"/>
    <property type="match status" value="1"/>
</dbReference>
<dbReference type="Pfam" id="PF01571">
    <property type="entry name" value="GCV_T"/>
    <property type="match status" value="1"/>
</dbReference>
<dbReference type="Pfam" id="PF08669">
    <property type="entry name" value="GCV_T_C"/>
    <property type="match status" value="1"/>
</dbReference>
<dbReference type="PIRSF" id="PIRSF006487">
    <property type="entry name" value="GcvT"/>
    <property type="match status" value="1"/>
</dbReference>
<dbReference type="SUPFAM" id="SSF101790">
    <property type="entry name" value="Aminomethyltransferase beta-barrel domain"/>
    <property type="match status" value="1"/>
</dbReference>
<dbReference type="SUPFAM" id="SSF103025">
    <property type="entry name" value="Folate-binding domain"/>
    <property type="match status" value="1"/>
</dbReference>
<protein>
    <recommendedName>
        <fullName evidence="1">Aminomethyltransferase</fullName>
        <ecNumber evidence="1">2.1.2.10</ecNumber>
    </recommendedName>
    <alternativeName>
        <fullName evidence="1">Glycine cleavage system T protein</fullName>
    </alternativeName>
</protein>
<name>GCST_KLEP7</name>
<reference key="1">
    <citation type="submission" date="2006-09" db="EMBL/GenBank/DDBJ databases">
        <authorList>
            <consortium name="The Klebsiella pneumonia Genome Sequencing Project"/>
            <person name="McClelland M."/>
            <person name="Sanderson E.K."/>
            <person name="Spieth J."/>
            <person name="Clifton W.S."/>
            <person name="Latreille P."/>
            <person name="Sabo A."/>
            <person name="Pepin K."/>
            <person name="Bhonagiri V."/>
            <person name="Porwollik S."/>
            <person name="Ali J."/>
            <person name="Wilson R.K."/>
        </authorList>
    </citation>
    <scope>NUCLEOTIDE SEQUENCE [LARGE SCALE GENOMIC DNA]</scope>
    <source>
        <strain>ATCC 700721 / MGH 78578</strain>
    </source>
</reference>
<organism>
    <name type="scientific">Klebsiella pneumoniae subsp. pneumoniae (strain ATCC 700721 / MGH 78578)</name>
    <dbReference type="NCBI Taxonomy" id="272620"/>
    <lineage>
        <taxon>Bacteria</taxon>
        <taxon>Pseudomonadati</taxon>
        <taxon>Pseudomonadota</taxon>
        <taxon>Gammaproteobacteria</taxon>
        <taxon>Enterobacterales</taxon>
        <taxon>Enterobacteriaceae</taxon>
        <taxon>Klebsiella/Raoultella group</taxon>
        <taxon>Klebsiella</taxon>
        <taxon>Klebsiella pneumoniae complex</taxon>
    </lineage>
</organism>
<proteinExistence type="inferred from homology"/>
<evidence type="ECO:0000255" key="1">
    <source>
        <dbReference type="HAMAP-Rule" id="MF_00259"/>
    </source>
</evidence>
<feature type="chain" id="PRO_1000047674" description="Aminomethyltransferase">
    <location>
        <begin position="1"/>
        <end position="364"/>
    </location>
</feature>
<keyword id="KW-0032">Aminotransferase</keyword>
<keyword id="KW-0808">Transferase</keyword>
<comment type="function">
    <text evidence="1">The glycine cleavage system catalyzes the degradation of glycine.</text>
</comment>
<comment type="catalytic activity">
    <reaction evidence="1">
        <text>N(6)-[(R)-S(8)-aminomethyldihydrolipoyl]-L-lysyl-[protein] + (6S)-5,6,7,8-tetrahydrofolate = N(6)-[(R)-dihydrolipoyl]-L-lysyl-[protein] + (6R)-5,10-methylene-5,6,7,8-tetrahydrofolate + NH4(+)</text>
        <dbReference type="Rhea" id="RHEA:16945"/>
        <dbReference type="Rhea" id="RHEA-COMP:10475"/>
        <dbReference type="Rhea" id="RHEA-COMP:10492"/>
        <dbReference type="ChEBI" id="CHEBI:15636"/>
        <dbReference type="ChEBI" id="CHEBI:28938"/>
        <dbReference type="ChEBI" id="CHEBI:57453"/>
        <dbReference type="ChEBI" id="CHEBI:83100"/>
        <dbReference type="ChEBI" id="CHEBI:83143"/>
        <dbReference type="EC" id="2.1.2.10"/>
    </reaction>
</comment>
<comment type="subunit">
    <text evidence="1">The glycine cleavage system is composed of four proteins: P, T, L and H.</text>
</comment>
<comment type="similarity">
    <text evidence="1">Belongs to the GcvT family.</text>
</comment>
<accession>A6TDR7</accession>